<feature type="chain" id="PRO_0000241529" description="Elongation factor Ts">
    <location>
        <begin position="1"/>
        <end position="283"/>
    </location>
</feature>
<feature type="region of interest" description="Involved in Mg(2+) ion dislocation from EF-Tu" evidence="1">
    <location>
        <begin position="80"/>
        <end position="83"/>
    </location>
</feature>
<reference key="1">
    <citation type="journal article" date="2005" name="Nucleic Acids Res.">
        <title>Genome dynamics and diversity of Shigella species, the etiologic agents of bacillary dysentery.</title>
        <authorList>
            <person name="Yang F."/>
            <person name="Yang J."/>
            <person name="Zhang X."/>
            <person name="Chen L."/>
            <person name="Jiang Y."/>
            <person name="Yan Y."/>
            <person name="Tang X."/>
            <person name="Wang J."/>
            <person name="Xiong Z."/>
            <person name="Dong J."/>
            <person name="Xue Y."/>
            <person name="Zhu Y."/>
            <person name="Xu X."/>
            <person name="Sun L."/>
            <person name="Chen S."/>
            <person name="Nie H."/>
            <person name="Peng J."/>
            <person name="Xu J."/>
            <person name="Wang Y."/>
            <person name="Yuan Z."/>
            <person name="Wen Y."/>
            <person name="Yao Z."/>
            <person name="Shen Y."/>
            <person name="Qiang B."/>
            <person name="Hou Y."/>
            <person name="Yu J."/>
            <person name="Jin Q."/>
        </authorList>
    </citation>
    <scope>NUCLEOTIDE SEQUENCE [LARGE SCALE GENOMIC DNA]</scope>
    <source>
        <strain>Ss046</strain>
    </source>
</reference>
<sequence length="283" mass="30423">MAEITASLVKELRERTGAGMMDCKKALTEANGDIELAIENMRKSGAIKAAKKAGNVAADGVIKTKIDGNYGIILEVNCQTDFVAKDAGFQAFADKVLDAAVAGKITDVEVLKAQFEEERVALVAKIGENINIRRVAALEGDVLGSYQHGARIGVLVAAKGADEELVKHIAMHVAASKPEFIKPEDVSAEVVEKEYQVQLDIAMQSGKPKEIAEKMVEGRMKKFTGEVSLTGQPFVMEPSKTVGQLLKEHNAEVTGFIRFEVGEGIEKVETDFAAEVAAMSKQS</sequence>
<accession>Q3Z5I8</accession>
<comment type="function">
    <text evidence="1">Associates with the EF-Tu.GDP complex and induces the exchange of GDP to GTP. It remains bound to the aminoacyl-tRNA.EF-Tu.GTP complex up to the GTP hydrolysis stage on the ribosome.</text>
</comment>
<comment type="subcellular location">
    <subcellularLocation>
        <location evidence="1">Cytoplasm</location>
    </subcellularLocation>
</comment>
<comment type="similarity">
    <text evidence="1">Belongs to the EF-Ts family.</text>
</comment>
<organism>
    <name type="scientific">Shigella sonnei (strain Ss046)</name>
    <dbReference type="NCBI Taxonomy" id="300269"/>
    <lineage>
        <taxon>Bacteria</taxon>
        <taxon>Pseudomonadati</taxon>
        <taxon>Pseudomonadota</taxon>
        <taxon>Gammaproteobacteria</taxon>
        <taxon>Enterobacterales</taxon>
        <taxon>Enterobacteriaceae</taxon>
        <taxon>Shigella</taxon>
    </lineage>
</organism>
<name>EFTS_SHISS</name>
<proteinExistence type="inferred from homology"/>
<dbReference type="EMBL" id="CP000038">
    <property type="protein sequence ID" value="AAZ86974.1"/>
    <property type="molecule type" value="Genomic_DNA"/>
</dbReference>
<dbReference type="RefSeq" id="WP_000818114.1">
    <property type="nucleotide sequence ID" value="NC_007384.1"/>
</dbReference>
<dbReference type="SMR" id="Q3Z5I8"/>
<dbReference type="GeneID" id="93777255"/>
<dbReference type="KEGG" id="ssn:SSON_0182"/>
<dbReference type="HOGENOM" id="CLU_047155_0_2_6"/>
<dbReference type="Proteomes" id="UP000002529">
    <property type="component" value="Chromosome"/>
</dbReference>
<dbReference type="GO" id="GO:0005737">
    <property type="term" value="C:cytoplasm"/>
    <property type="evidence" value="ECO:0007669"/>
    <property type="project" value="UniProtKB-SubCell"/>
</dbReference>
<dbReference type="GO" id="GO:0003746">
    <property type="term" value="F:translation elongation factor activity"/>
    <property type="evidence" value="ECO:0007669"/>
    <property type="project" value="UniProtKB-UniRule"/>
</dbReference>
<dbReference type="CDD" id="cd14275">
    <property type="entry name" value="UBA_EF-Ts"/>
    <property type="match status" value="1"/>
</dbReference>
<dbReference type="FunFam" id="1.10.286.20:FF:000001">
    <property type="entry name" value="Elongation factor Ts"/>
    <property type="match status" value="1"/>
</dbReference>
<dbReference type="FunFam" id="1.10.8.10:FF:000001">
    <property type="entry name" value="Elongation factor Ts"/>
    <property type="match status" value="1"/>
</dbReference>
<dbReference type="FunFam" id="3.30.479.20:FF:000001">
    <property type="entry name" value="Elongation factor Ts"/>
    <property type="match status" value="1"/>
</dbReference>
<dbReference type="Gene3D" id="1.10.286.20">
    <property type="match status" value="1"/>
</dbReference>
<dbReference type="Gene3D" id="1.10.8.10">
    <property type="entry name" value="DNA helicase RuvA subunit, C-terminal domain"/>
    <property type="match status" value="1"/>
</dbReference>
<dbReference type="Gene3D" id="3.30.479.20">
    <property type="entry name" value="Elongation factor Ts, dimerisation domain"/>
    <property type="match status" value="2"/>
</dbReference>
<dbReference type="HAMAP" id="MF_00050">
    <property type="entry name" value="EF_Ts"/>
    <property type="match status" value="1"/>
</dbReference>
<dbReference type="InterPro" id="IPR036402">
    <property type="entry name" value="EF-Ts_dimer_sf"/>
</dbReference>
<dbReference type="InterPro" id="IPR001816">
    <property type="entry name" value="Transl_elong_EFTs/EF1B"/>
</dbReference>
<dbReference type="InterPro" id="IPR014039">
    <property type="entry name" value="Transl_elong_EFTs/EF1B_dimer"/>
</dbReference>
<dbReference type="InterPro" id="IPR018101">
    <property type="entry name" value="Transl_elong_Ts_CS"/>
</dbReference>
<dbReference type="InterPro" id="IPR009060">
    <property type="entry name" value="UBA-like_sf"/>
</dbReference>
<dbReference type="NCBIfam" id="TIGR00116">
    <property type="entry name" value="tsf"/>
    <property type="match status" value="1"/>
</dbReference>
<dbReference type="PANTHER" id="PTHR11741">
    <property type="entry name" value="ELONGATION FACTOR TS"/>
    <property type="match status" value="1"/>
</dbReference>
<dbReference type="PANTHER" id="PTHR11741:SF0">
    <property type="entry name" value="ELONGATION FACTOR TS, MITOCHONDRIAL"/>
    <property type="match status" value="1"/>
</dbReference>
<dbReference type="Pfam" id="PF00889">
    <property type="entry name" value="EF_TS"/>
    <property type="match status" value="1"/>
</dbReference>
<dbReference type="SUPFAM" id="SSF54713">
    <property type="entry name" value="Elongation factor Ts (EF-Ts), dimerisation domain"/>
    <property type="match status" value="2"/>
</dbReference>
<dbReference type="SUPFAM" id="SSF46934">
    <property type="entry name" value="UBA-like"/>
    <property type="match status" value="1"/>
</dbReference>
<dbReference type="PROSITE" id="PS01126">
    <property type="entry name" value="EF_TS_1"/>
    <property type="match status" value="1"/>
</dbReference>
<dbReference type="PROSITE" id="PS01127">
    <property type="entry name" value="EF_TS_2"/>
    <property type="match status" value="1"/>
</dbReference>
<keyword id="KW-0963">Cytoplasm</keyword>
<keyword id="KW-0251">Elongation factor</keyword>
<keyword id="KW-0648">Protein biosynthesis</keyword>
<keyword id="KW-1185">Reference proteome</keyword>
<gene>
    <name evidence="1" type="primary">tsf</name>
    <name type="ordered locus">SSON_0182</name>
</gene>
<protein>
    <recommendedName>
        <fullName evidence="1">Elongation factor Ts</fullName>
        <shortName evidence="1">EF-Ts</shortName>
    </recommendedName>
</protein>
<evidence type="ECO:0000255" key="1">
    <source>
        <dbReference type="HAMAP-Rule" id="MF_00050"/>
    </source>
</evidence>